<organism>
    <name type="scientific">Xenoacremonium sinensis</name>
    <name type="common">Endophyte fungus</name>
    <dbReference type="NCBI Taxonomy" id="2480843"/>
    <lineage>
        <taxon>Eukaryota</taxon>
        <taxon>Fungi</taxon>
        <taxon>Dikarya</taxon>
        <taxon>Ascomycota</taxon>
        <taxon>Pezizomycotina</taxon>
        <taxon>Sordariomycetes</taxon>
        <taxon>Hypocreomycetidae</taxon>
        <taxon>Hypocreales</taxon>
        <taxon>Nectriaceae</taxon>
        <taxon>Xenoacremonium</taxon>
    </lineage>
</organism>
<comment type="function">
    <text evidence="3">Trans-enoyl reductase; part of the gene cluster that mediates the biosynthesis of xenoacremones such as xenoacremone A, a compound that shows inhibitory activity toward the PI3K/AKT signaling pathway and which has the ability to induce apoptosis of A549 lung cancer cells (PubMed:34900544). Within the pathway, cooperation of the hybrid PKS-NRPS xenE and the trans-acting enoyl reductase xenG is responsible for the formation of the reduced tyrosine-nonaketide derivative (PubMed:34900544). The alpha/beta hydrolase xenA then accelerates intramolecular nucleophilic attack to give a pyrrolidone derivative (PubMed:34900544). Subsequently, three enzymes, xenF, xenD, and xenC, coordinately participate in the conversion to xenoacremone B (PubMed:34900544). XenF catalyzes sigmatropic rearrangement to form an A-ring, which leads to an unusual intermediate with a hexane ring, which is required for the formation of the tricarbocyclic product (PubMed:34900544). Epoxidation catalyzed by xenD and the formation of the paracyclophane ether catalyzed by xenC initiate a spontaneous intramolecular Diels-Alder (IMDA) reaction to yield xenoacremone B (PubMed:34900544). Spontaneous hydration of xenoacremone B leads to the formation of xenoacremone A, which undergoes subsequent methylation to afford xenoacremone C (PubMed:34900544).</text>
</comment>
<comment type="pathway">
    <text evidence="3">Mycotoxin biosynthesis.</text>
</comment>
<comment type="subunit">
    <text evidence="1">Monomer.</text>
</comment>
<comment type="disruption phenotype">
    <text evidence="3">Abolishes the production of xenoacremones A, B and C.</text>
</comment>
<comment type="similarity">
    <text evidence="5">Belongs to the zinc-containing alcohol dehydrogenase family.</text>
</comment>
<proteinExistence type="evidence at protein level"/>
<sequence>MASTGLPQLPPSQKAVIQSEKTPGAFEVSENRPVPVPKANELIVKVSAVSLNHCDWKMPGRVPCPGAVDGADYSGTIVRMGEIAALKSGFQIGDRVAGAQMASSRRRPWAGAFTEYLRDEYDMVWKVPDNLSWEQAAAIGCATTSTVGMALWISMKLPGTPENPIKEPKLVLVYGGSTASGTFAIQLLKLSGYKVVTTCSPKNFKLVEEYGADKAFDYHSATCGEDIRAYTNNTLEYALDIITEARTIRHCYAAIGRGGGRYCGFELLPEDLIATMRKSVKAEWVMGLEMTGLEIDLPGGYYRKANPELHTWFCDWKERYVALFGSGKTKTHPITVRQGGLEKVIDGIESMRRREVSGEKIVYPLYIKGC</sequence>
<dbReference type="EC" id="1.-.-.-" evidence="3"/>
<dbReference type="EMBL" id="MT876600">
    <property type="protein sequence ID" value="QOJ72665.1"/>
    <property type="molecule type" value="Genomic_DNA"/>
</dbReference>
<dbReference type="SMR" id="A0A7L9EZZ4"/>
<dbReference type="GO" id="GO:0000166">
    <property type="term" value="F:nucleotide binding"/>
    <property type="evidence" value="ECO:0007669"/>
    <property type="project" value="UniProtKB-KW"/>
</dbReference>
<dbReference type="GO" id="GO:0016651">
    <property type="term" value="F:oxidoreductase activity, acting on NAD(P)H"/>
    <property type="evidence" value="ECO:0007669"/>
    <property type="project" value="InterPro"/>
</dbReference>
<dbReference type="CDD" id="cd08249">
    <property type="entry name" value="enoyl_reductase_like"/>
    <property type="match status" value="1"/>
</dbReference>
<dbReference type="Gene3D" id="3.90.180.10">
    <property type="entry name" value="Medium-chain alcohol dehydrogenases, catalytic domain"/>
    <property type="match status" value="1"/>
</dbReference>
<dbReference type="Gene3D" id="3.40.50.720">
    <property type="entry name" value="NAD(P)-binding Rossmann-like Domain"/>
    <property type="match status" value="1"/>
</dbReference>
<dbReference type="InterPro" id="IPR013149">
    <property type="entry name" value="ADH-like_C"/>
</dbReference>
<dbReference type="InterPro" id="IPR013154">
    <property type="entry name" value="ADH-like_N"/>
</dbReference>
<dbReference type="InterPro" id="IPR011032">
    <property type="entry name" value="GroES-like_sf"/>
</dbReference>
<dbReference type="InterPro" id="IPR036291">
    <property type="entry name" value="NAD(P)-bd_dom_sf"/>
</dbReference>
<dbReference type="InterPro" id="IPR020843">
    <property type="entry name" value="PKS_ER"/>
</dbReference>
<dbReference type="InterPro" id="IPR047122">
    <property type="entry name" value="Trans-enoyl_RdTase-like"/>
</dbReference>
<dbReference type="PANTHER" id="PTHR45348">
    <property type="entry name" value="HYPOTHETICAL OXIDOREDUCTASE (EUROFUNG)"/>
    <property type="match status" value="1"/>
</dbReference>
<dbReference type="PANTHER" id="PTHR45348:SF1">
    <property type="entry name" value="TRANS-ENOYL REDUCTASE STHE"/>
    <property type="match status" value="1"/>
</dbReference>
<dbReference type="Pfam" id="PF08240">
    <property type="entry name" value="ADH_N"/>
    <property type="match status" value="1"/>
</dbReference>
<dbReference type="Pfam" id="PF00107">
    <property type="entry name" value="ADH_zinc_N"/>
    <property type="match status" value="1"/>
</dbReference>
<dbReference type="SMART" id="SM00829">
    <property type="entry name" value="PKS_ER"/>
    <property type="match status" value="1"/>
</dbReference>
<dbReference type="SUPFAM" id="SSF50129">
    <property type="entry name" value="GroES-like"/>
    <property type="match status" value="1"/>
</dbReference>
<dbReference type="SUPFAM" id="SSF51735">
    <property type="entry name" value="NAD(P)-binding Rossmann-fold domains"/>
    <property type="match status" value="1"/>
</dbReference>
<keyword id="KW-0521">NADP</keyword>
<keyword id="KW-0547">Nucleotide-binding</keyword>
<keyword id="KW-0560">Oxidoreductase</keyword>
<reference key="1">
    <citation type="journal article" date="2021" name="Acta Pharm. Sin. B (APSB)">
        <title>Tricarbocyclic core formation of tyrosine-decahydrofluorenes implies a three-enzyme cascade with XenF-mediated sigmatropic rearrangement as a prerequisite.</title>
        <authorList>
            <person name="Liu Z."/>
            <person name="Li W."/>
            <person name="Zhang P."/>
            <person name="Fan J."/>
            <person name="Zhang F."/>
            <person name="Wang C."/>
            <person name="Li S."/>
            <person name="Sun Y."/>
            <person name="Chen S."/>
            <person name="Yin W."/>
        </authorList>
    </citation>
    <scope>NUCLEOTIDE SEQUENCE [GENOMIC DNA]</scope>
    <scope>FUNCTION</scope>
    <scope>DISRUPTION PHENOTYPE</scope>
    <scope>CATALYTIC ACTIVITY</scope>
    <scope>PATHWAY</scope>
    <source>
        <strain>ML-31</strain>
    </source>
</reference>
<gene>
    <name evidence="4" type="primary">xenG</name>
</gene>
<protein>
    <recommendedName>
        <fullName evidence="4">Trans-enoyl reductase xenG</fullName>
        <ecNumber evidence="3">1.-.-.-</ecNumber>
    </recommendedName>
    <alternativeName>
        <fullName evidence="4">Xenoacremones biosynthesis cluster protein G</fullName>
    </alternativeName>
</protein>
<feature type="chain" id="PRO_0000456863" description="Trans-enoyl reductase xenG">
    <location>
        <begin position="1"/>
        <end position="370"/>
    </location>
</feature>
<feature type="region of interest" description="Disordered" evidence="2">
    <location>
        <begin position="1"/>
        <end position="32"/>
    </location>
</feature>
<feature type="binding site" evidence="1">
    <location>
        <begin position="54"/>
        <end position="57"/>
    </location>
    <ligand>
        <name>NADP(+)</name>
        <dbReference type="ChEBI" id="CHEBI:58349"/>
    </ligand>
</feature>
<feature type="binding site" evidence="1">
    <location>
        <begin position="177"/>
        <end position="180"/>
    </location>
    <ligand>
        <name>NADP(+)</name>
        <dbReference type="ChEBI" id="CHEBI:58349"/>
    </ligand>
</feature>
<feature type="binding site" evidence="1">
    <location>
        <begin position="200"/>
        <end position="203"/>
    </location>
    <ligand>
        <name>NADP(+)</name>
        <dbReference type="ChEBI" id="CHEBI:58349"/>
    </ligand>
</feature>
<feature type="binding site" evidence="1">
    <location>
        <position position="218"/>
    </location>
    <ligand>
        <name>NADP(+)</name>
        <dbReference type="ChEBI" id="CHEBI:58349"/>
    </ligand>
</feature>
<feature type="binding site" evidence="1">
    <location>
        <begin position="265"/>
        <end position="266"/>
    </location>
    <ligand>
        <name>NADP(+)</name>
        <dbReference type="ChEBI" id="CHEBI:58349"/>
    </ligand>
</feature>
<feature type="binding site" evidence="1">
    <location>
        <begin position="356"/>
        <end position="357"/>
    </location>
    <ligand>
        <name>NADP(+)</name>
        <dbReference type="ChEBI" id="CHEBI:58349"/>
    </ligand>
</feature>
<accession>A0A7L9EZZ4</accession>
<evidence type="ECO:0000250" key="1">
    <source>
        <dbReference type="UniProtKB" id="Q9Y7D0"/>
    </source>
</evidence>
<evidence type="ECO:0000256" key="2">
    <source>
        <dbReference type="SAM" id="MobiDB-lite"/>
    </source>
</evidence>
<evidence type="ECO:0000269" key="3">
    <source>
    </source>
</evidence>
<evidence type="ECO:0000303" key="4">
    <source>
    </source>
</evidence>
<evidence type="ECO:0000305" key="5"/>
<name>XENG_XENSI</name>